<comment type="function">
    <text evidence="1">NAD-binding protein involved in the addition of a carboxymethylaminomethyl (cmnm) group at the wobble position (U34) of certain tRNAs, forming tRNA-cmnm(5)s(2)U34.</text>
</comment>
<comment type="cofactor">
    <cofactor evidence="1">
        <name>FAD</name>
        <dbReference type="ChEBI" id="CHEBI:57692"/>
    </cofactor>
</comment>
<comment type="subunit">
    <text evidence="1">Homodimer. Heterotetramer of two MnmE and two MnmG subunits.</text>
</comment>
<comment type="subcellular location">
    <subcellularLocation>
        <location evidence="1">Cytoplasm</location>
    </subcellularLocation>
</comment>
<comment type="similarity">
    <text evidence="1">Belongs to the MnmG family.</text>
</comment>
<reference key="1">
    <citation type="submission" date="2007-06" db="EMBL/GenBank/DDBJ databases">
        <title>Complete sequence of Marinomonas sp. MWYL1.</title>
        <authorList>
            <consortium name="US DOE Joint Genome Institute"/>
            <person name="Copeland A."/>
            <person name="Lucas S."/>
            <person name="Lapidus A."/>
            <person name="Barry K."/>
            <person name="Glavina del Rio T."/>
            <person name="Dalin E."/>
            <person name="Tice H."/>
            <person name="Pitluck S."/>
            <person name="Kiss H."/>
            <person name="Brettin T."/>
            <person name="Bruce D."/>
            <person name="Detter J.C."/>
            <person name="Han C."/>
            <person name="Schmutz J."/>
            <person name="Larimer F."/>
            <person name="Land M."/>
            <person name="Hauser L."/>
            <person name="Kyrpides N."/>
            <person name="Kim E."/>
            <person name="Johnston A.W.B."/>
            <person name="Todd J.D."/>
            <person name="Rogers R."/>
            <person name="Wexler M."/>
            <person name="Bond P.L."/>
            <person name="Li Y."/>
            <person name="Richardson P."/>
        </authorList>
    </citation>
    <scope>NUCLEOTIDE SEQUENCE [LARGE SCALE GENOMIC DNA]</scope>
    <source>
        <strain>MWYL1</strain>
    </source>
</reference>
<sequence>MDFPSRFDVIVVGGGHAGTEAALAAARMGVKTLLLSHNIETLGQMSCNPAIGGIGKSHLVKEIDALDGAMALATDQAGIQFRTLNSRKGPAVRATRAQADRILYKAAIRHKLENQENLWLFQQSAEDLIVENGAARGVITQTGIRFNSKTVVLTAGTFLGGVIHIGLENHSGGRAGDPPSIGLAQKLRALPFRVDRLKTGTPPRIDARSVDFSQMQAQPGDDIDPVMSYMGNRAMHPRQIECFITHTNERTHDIIRAGMDRSPMYTGVIEGVGPRYCPSIEDKIVRFADKNSHQIFIEPEGLTTHELYPNGISTSLPFDVQIELVRSMKGMENAHIIRPGYAIEYDYFNPQDLKYSLETKHMPGLFFAGQINGTTGYEEAGAQGLLAGLNAALLAQEKDAWTPRRDEAYLGVLVDDLISMGTKEPYRMFTSRAEYRLILREDNADMRLTEKGRELGLVSDERWAAFCKKREAIELETQRLRSSWIVPNTPEADSINPKLETPITHEYSLLDLLKRPNIVYSDIANLKNGLDEPVDEQVSEQVQIAVKYAGYISRQAEDIERLRRQENTELPDDLDYSKMEGLSNEIKQKLTQLRPATLAAASRIQGVTPAAVSLLLIHLKKRAIARKSA</sequence>
<proteinExistence type="inferred from homology"/>
<organism>
    <name type="scientific">Marinomonas sp. (strain MWYL1)</name>
    <dbReference type="NCBI Taxonomy" id="400668"/>
    <lineage>
        <taxon>Bacteria</taxon>
        <taxon>Pseudomonadati</taxon>
        <taxon>Pseudomonadota</taxon>
        <taxon>Gammaproteobacteria</taxon>
        <taxon>Oceanospirillales</taxon>
        <taxon>Oceanospirillaceae</taxon>
        <taxon>Marinomonas</taxon>
    </lineage>
</organism>
<name>MNMG_MARMS</name>
<keyword id="KW-0963">Cytoplasm</keyword>
<keyword id="KW-0274">FAD</keyword>
<keyword id="KW-0285">Flavoprotein</keyword>
<keyword id="KW-0520">NAD</keyword>
<keyword id="KW-0819">tRNA processing</keyword>
<accession>A6W3T9</accession>
<evidence type="ECO:0000255" key="1">
    <source>
        <dbReference type="HAMAP-Rule" id="MF_00129"/>
    </source>
</evidence>
<protein>
    <recommendedName>
        <fullName evidence="1">tRNA uridine 5-carboxymethylaminomethyl modification enzyme MnmG</fullName>
    </recommendedName>
    <alternativeName>
        <fullName evidence="1">Glucose-inhibited division protein A</fullName>
    </alternativeName>
</protein>
<dbReference type="EMBL" id="CP000749">
    <property type="protein sequence ID" value="ABR73368.1"/>
    <property type="molecule type" value="Genomic_DNA"/>
</dbReference>
<dbReference type="SMR" id="A6W3T9"/>
<dbReference type="STRING" id="400668.Mmwyl1_4473"/>
<dbReference type="KEGG" id="mmw:Mmwyl1_4473"/>
<dbReference type="eggNOG" id="COG0445">
    <property type="taxonomic scope" value="Bacteria"/>
</dbReference>
<dbReference type="HOGENOM" id="CLU_007831_2_2_6"/>
<dbReference type="OrthoDB" id="9815560at2"/>
<dbReference type="GO" id="GO:0005829">
    <property type="term" value="C:cytosol"/>
    <property type="evidence" value="ECO:0007669"/>
    <property type="project" value="TreeGrafter"/>
</dbReference>
<dbReference type="GO" id="GO:0050660">
    <property type="term" value="F:flavin adenine dinucleotide binding"/>
    <property type="evidence" value="ECO:0007669"/>
    <property type="project" value="UniProtKB-UniRule"/>
</dbReference>
<dbReference type="GO" id="GO:0030488">
    <property type="term" value="P:tRNA methylation"/>
    <property type="evidence" value="ECO:0007669"/>
    <property type="project" value="TreeGrafter"/>
</dbReference>
<dbReference type="GO" id="GO:0002098">
    <property type="term" value="P:tRNA wobble uridine modification"/>
    <property type="evidence" value="ECO:0007669"/>
    <property type="project" value="InterPro"/>
</dbReference>
<dbReference type="FunFam" id="1.10.10.1800:FF:000001">
    <property type="entry name" value="tRNA uridine 5-carboxymethylaminomethyl modification enzyme MnmG"/>
    <property type="match status" value="1"/>
</dbReference>
<dbReference type="FunFam" id="1.10.150.570:FF:000001">
    <property type="entry name" value="tRNA uridine 5-carboxymethylaminomethyl modification enzyme MnmG"/>
    <property type="match status" value="1"/>
</dbReference>
<dbReference type="FunFam" id="3.50.50.60:FF:000002">
    <property type="entry name" value="tRNA uridine 5-carboxymethylaminomethyl modification enzyme MnmG"/>
    <property type="match status" value="1"/>
</dbReference>
<dbReference type="FunFam" id="3.50.50.60:FF:000010">
    <property type="entry name" value="tRNA uridine 5-carboxymethylaminomethyl modification enzyme MnmG"/>
    <property type="match status" value="1"/>
</dbReference>
<dbReference type="Gene3D" id="3.50.50.60">
    <property type="entry name" value="FAD/NAD(P)-binding domain"/>
    <property type="match status" value="2"/>
</dbReference>
<dbReference type="Gene3D" id="1.10.150.570">
    <property type="entry name" value="GidA associated domain, C-terminal subdomain"/>
    <property type="match status" value="1"/>
</dbReference>
<dbReference type="Gene3D" id="1.10.10.1800">
    <property type="entry name" value="tRNA uridine 5-carboxymethylaminomethyl modification enzyme MnmG/GidA"/>
    <property type="match status" value="1"/>
</dbReference>
<dbReference type="HAMAP" id="MF_00129">
    <property type="entry name" value="MnmG_GidA"/>
    <property type="match status" value="1"/>
</dbReference>
<dbReference type="InterPro" id="IPR036188">
    <property type="entry name" value="FAD/NAD-bd_sf"/>
</dbReference>
<dbReference type="InterPro" id="IPR049312">
    <property type="entry name" value="GIDA_C_N"/>
</dbReference>
<dbReference type="InterPro" id="IPR004416">
    <property type="entry name" value="MnmG"/>
</dbReference>
<dbReference type="InterPro" id="IPR002218">
    <property type="entry name" value="MnmG-rel"/>
</dbReference>
<dbReference type="InterPro" id="IPR020595">
    <property type="entry name" value="MnmG-rel_CS"/>
</dbReference>
<dbReference type="InterPro" id="IPR026904">
    <property type="entry name" value="MnmG_C"/>
</dbReference>
<dbReference type="InterPro" id="IPR047001">
    <property type="entry name" value="MnmG_C_subdom"/>
</dbReference>
<dbReference type="InterPro" id="IPR044920">
    <property type="entry name" value="MnmG_C_subdom_sf"/>
</dbReference>
<dbReference type="InterPro" id="IPR040131">
    <property type="entry name" value="MnmG_N"/>
</dbReference>
<dbReference type="NCBIfam" id="TIGR00136">
    <property type="entry name" value="mnmG_gidA"/>
    <property type="match status" value="1"/>
</dbReference>
<dbReference type="PANTHER" id="PTHR11806">
    <property type="entry name" value="GLUCOSE INHIBITED DIVISION PROTEIN A"/>
    <property type="match status" value="1"/>
</dbReference>
<dbReference type="PANTHER" id="PTHR11806:SF0">
    <property type="entry name" value="PROTEIN MTO1 HOMOLOG, MITOCHONDRIAL"/>
    <property type="match status" value="1"/>
</dbReference>
<dbReference type="Pfam" id="PF01134">
    <property type="entry name" value="GIDA"/>
    <property type="match status" value="1"/>
</dbReference>
<dbReference type="Pfam" id="PF21680">
    <property type="entry name" value="GIDA_C_1st"/>
    <property type="match status" value="1"/>
</dbReference>
<dbReference type="Pfam" id="PF13932">
    <property type="entry name" value="SAM_GIDA_C"/>
    <property type="match status" value="1"/>
</dbReference>
<dbReference type="PRINTS" id="PR00411">
    <property type="entry name" value="PNDRDTASEI"/>
</dbReference>
<dbReference type="SMART" id="SM01228">
    <property type="entry name" value="GIDA_assoc_3"/>
    <property type="match status" value="1"/>
</dbReference>
<dbReference type="SUPFAM" id="SSF51905">
    <property type="entry name" value="FAD/NAD(P)-binding domain"/>
    <property type="match status" value="1"/>
</dbReference>
<dbReference type="PROSITE" id="PS01280">
    <property type="entry name" value="GIDA_1"/>
    <property type="match status" value="1"/>
</dbReference>
<dbReference type="PROSITE" id="PS01281">
    <property type="entry name" value="GIDA_2"/>
    <property type="match status" value="1"/>
</dbReference>
<gene>
    <name evidence="1" type="primary">mnmG</name>
    <name evidence="1" type="synonym">gidA</name>
    <name type="ordered locus">Mmwyl1_4473</name>
</gene>
<feature type="chain" id="PRO_1000076321" description="tRNA uridine 5-carboxymethylaminomethyl modification enzyme MnmG">
    <location>
        <begin position="1"/>
        <end position="629"/>
    </location>
</feature>
<feature type="binding site" evidence="1">
    <location>
        <begin position="13"/>
        <end position="18"/>
    </location>
    <ligand>
        <name>FAD</name>
        <dbReference type="ChEBI" id="CHEBI:57692"/>
    </ligand>
</feature>
<feature type="binding site" evidence="1">
    <location>
        <begin position="273"/>
        <end position="287"/>
    </location>
    <ligand>
        <name>NAD(+)</name>
        <dbReference type="ChEBI" id="CHEBI:57540"/>
    </ligand>
</feature>